<accession>B5QUQ7</accession>
<keyword id="KW-0238">DNA-binding</keyword>
<keyword id="KW-0804">Transcription</keyword>
<keyword id="KW-0805">Transcription regulation</keyword>
<reference key="1">
    <citation type="journal article" date="2008" name="Genome Res.">
        <title>Comparative genome analysis of Salmonella enteritidis PT4 and Salmonella gallinarum 287/91 provides insights into evolutionary and host adaptation pathways.</title>
        <authorList>
            <person name="Thomson N.R."/>
            <person name="Clayton D.J."/>
            <person name="Windhorst D."/>
            <person name="Vernikos G."/>
            <person name="Davidson S."/>
            <person name="Churcher C."/>
            <person name="Quail M.A."/>
            <person name="Stevens M."/>
            <person name="Jones M.A."/>
            <person name="Watson M."/>
            <person name="Barron A."/>
            <person name="Layton A."/>
            <person name="Pickard D."/>
            <person name="Kingsley R.A."/>
            <person name="Bignell A."/>
            <person name="Clark L."/>
            <person name="Harris B."/>
            <person name="Ormond D."/>
            <person name="Abdellah Z."/>
            <person name="Brooks K."/>
            <person name="Cherevach I."/>
            <person name="Chillingworth T."/>
            <person name="Woodward J."/>
            <person name="Norberczak H."/>
            <person name="Lord A."/>
            <person name="Arrowsmith C."/>
            <person name="Jagels K."/>
            <person name="Moule S."/>
            <person name="Mungall K."/>
            <person name="Saunders M."/>
            <person name="Whitehead S."/>
            <person name="Chabalgoity J.A."/>
            <person name="Maskell D."/>
            <person name="Humphreys T."/>
            <person name="Roberts M."/>
            <person name="Barrow P.A."/>
            <person name="Dougan G."/>
            <person name="Parkhill J."/>
        </authorList>
    </citation>
    <scope>NUCLEOTIDE SEQUENCE [LARGE SCALE GENOMIC DNA]</scope>
    <source>
        <strain>P125109</strain>
    </source>
</reference>
<gene>
    <name evidence="1" type="primary">yidZ</name>
    <name type="ordered locus">SEN3662</name>
</gene>
<protein>
    <recommendedName>
        <fullName evidence="1">HTH-type transcriptional regulator YidZ</fullName>
    </recommendedName>
</protein>
<name>YIDZ_SALEP</name>
<organism>
    <name type="scientific">Salmonella enteritidis PT4 (strain P125109)</name>
    <dbReference type="NCBI Taxonomy" id="550537"/>
    <lineage>
        <taxon>Bacteria</taxon>
        <taxon>Pseudomonadati</taxon>
        <taxon>Pseudomonadota</taxon>
        <taxon>Gammaproteobacteria</taxon>
        <taxon>Enterobacterales</taxon>
        <taxon>Enterobacteriaceae</taxon>
        <taxon>Salmonella</taxon>
    </lineage>
</organism>
<comment type="function">
    <text evidence="1">Involved in anaerobic NO protection.</text>
</comment>
<comment type="similarity">
    <text evidence="2">Belongs to the LysR transcriptional regulatory family.</text>
</comment>
<dbReference type="EMBL" id="AM933172">
    <property type="protein sequence ID" value="CAR35238.1"/>
    <property type="molecule type" value="Genomic_DNA"/>
</dbReference>
<dbReference type="RefSeq" id="WP_000749365.1">
    <property type="nucleotide sequence ID" value="NC_011294.1"/>
</dbReference>
<dbReference type="SMR" id="B5QUQ7"/>
<dbReference type="KEGG" id="set:SEN3662"/>
<dbReference type="HOGENOM" id="CLU_039613_39_2_6"/>
<dbReference type="Proteomes" id="UP000000613">
    <property type="component" value="Chromosome"/>
</dbReference>
<dbReference type="GO" id="GO:0003677">
    <property type="term" value="F:DNA binding"/>
    <property type="evidence" value="ECO:0007669"/>
    <property type="project" value="UniProtKB-KW"/>
</dbReference>
<dbReference type="GO" id="GO:0003700">
    <property type="term" value="F:DNA-binding transcription factor activity"/>
    <property type="evidence" value="ECO:0007669"/>
    <property type="project" value="UniProtKB-UniRule"/>
</dbReference>
<dbReference type="CDD" id="cd08417">
    <property type="entry name" value="PBP2_Nitroaromatics_like"/>
    <property type="match status" value="1"/>
</dbReference>
<dbReference type="Gene3D" id="3.40.190.10">
    <property type="entry name" value="Periplasmic binding protein-like II"/>
    <property type="match status" value="2"/>
</dbReference>
<dbReference type="Gene3D" id="1.10.10.10">
    <property type="entry name" value="Winged helix-like DNA-binding domain superfamily/Winged helix DNA-binding domain"/>
    <property type="match status" value="1"/>
</dbReference>
<dbReference type="HAMAP" id="MF_01607">
    <property type="entry name" value="HTH_type_YidZ"/>
    <property type="match status" value="1"/>
</dbReference>
<dbReference type="InterPro" id="IPR050389">
    <property type="entry name" value="LysR-type_TF"/>
</dbReference>
<dbReference type="InterPro" id="IPR005119">
    <property type="entry name" value="LysR_subst-bd"/>
</dbReference>
<dbReference type="InterPro" id="IPR000847">
    <property type="entry name" value="Tscrpt_reg_HTH_LysR"/>
</dbReference>
<dbReference type="InterPro" id="IPR023746">
    <property type="entry name" value="Tscrpt_reg_YidZ"/>
</dbReference>
<dbReference type="InterPro" id="IPR036388">
    <property type="entry name" value="WH-like_DNA-bd_sf"/>
</dbReference>
<dbReference type="InterPro" id="IPR036390">
    <property type="entry name" value="WH_DNA-bd_sf"/>
</dbReference>
<dbReference type="InterPro" id="IPR037402">
    <property type="entry name" value="YidZ_PBP2"/>
</dbReference>
<dbReference type="NCBIfam" id="NF007581">
    <property type="entry name" value="PRK10216.1"/>
    <property type="match status" value="1"/>
</dbReference>
<dbReference type="PANTHER" id="PTHR30118">
    <property type="entry name" value="HTH-TYPE TRANSCRIPTIONAL REGULATOR LEUO-RELATED"/>
    <property type="match status" value="1"/>
</dbReference>
<dbReference type="PANTHER" id="PTHR30118:SF11">
    <property type="entry name" value="HTH-TYPE TRANSCRIPTIONAL REGULATOR YIDZ"/>
    <property type="match status" value="1"/>
</dbReference>
<dbReference type="Pfam" id="PF00126">
    <property type="entry name" value="HTH_1"/>
    <property type="match status" value="1"/>
</dbReference>
<dbReference type="Pfam" id="PF03466">
    <property type="entry name" value="LysR_substrate"/>
    <property type="match status" value="1"/>
</dbReference>
<dbReference type="SUPFAM" id="SSF53850">
    <property type="entry name" value="Periplasmic binding protein-like II"/>
    <property type="match status" value="1"/>
</dbReference>
<dbReference type="SUPFAM" id="SSF46785">
    <property type="entry name" value="Winged helix' DNA-binding domain"/>
    <property type="match status" value="1"/>
</dbReference>
<dbReference type="PROSITE" id="PS50931">
    <property type="entry name" value="HTH_LYSR"/>
    <property type="match status" value="1"/>
</dbReference>
<proteinExistence type="inferred from homology"/>
<feature type="chain" id="PRO_1000148200" description="HTH-type transcriptional regulator YidZ">
    <location>
        <begin position="1"/>
        <end position="319"/>
    </location>
</feature>
<feature type="domain" description="HTH lysR-type" evidence="1">
    <location>
        <begin position="8"/>
        <end position="65"/>
    </location>
</feature>
<feature type="DNA-binding region" description="H-T-H motif" evidence="1">
    <location>
        <begin position="25"/>
        <end position="44"/>
    </location>
</feature>
<evidence type="ECO:0000255" key="1">
    <source>
        <dbReference type="HAMAP-Rule" id="MF_01607"/>
    </source>
</evidence>
<evidence type="ECO:0000305" key="2"/>
<sequence>MKKSLTNLDLNLLLCLQLLMQERSVTKAAKRMNVTPSAVSKSLAKLRAWFDDPLFVNTPLGLAPTPLMVSMEQSLADWMQMGNQLLDKPHHQTPRGLKFELAAESPLMMIMFNSLSQQIYQRYPQATIKVRNWDYDSLEAITRGEVDIGFTGRESHPRSRELLSLLPLAIDFEVLFSDLPWVWLREDHPALREAWDLDTFLRYPHISICWEQSDTWALDDVLQEMGRKRHIALSLPGFEQSLFMAAQPDHTLIATAPRYCQHYNQLHQLPLVARPLPFDAQQREKLMVPFTLLWHKRNSHNPKIVWLRQAINTLCRRLI</sequence>